<feature type="transit peptide" description="Chloroplast" evidence="2">
    <location>
        <begin position="1"/>
        <end position="47"/>
    </location>
</feature>
<feature type="chain" id="PRO_0000422051" description="Beta-carotene isomerase D27, chloroplastic">
    <location>
        <begin position="48"/>
        <end position="264"/>
    </location>
</feature>
<keyword id="KW-0025">Alternative splicing</keyword>
<keyword id="KW-0150">Chloroplast</keyword>
<keyword id="KW-0408">Iron</keyword>
<keyword id="KW-0413">Isomerase</keyword>
<keyword id="KW-0479">Metal-binding</keyword>
<keyword id="KW-0934">Plastid</keyword>
<keyword id="KW-1185">Reference proteome</keyword>
<keyword id="KW-0809">Transit peptide</keyword>
<name>D27_ARATH</name>
<proteinExistence type="evidence at protein level"/>
<protein>
    <recommendedName>
        <fullName>Beta-carotene isomerase D27, chloroplastic</fullName>
        <ecNumber>5.2.1.14</ecNumber>
    </recommendedName>
    <alternativeName>
        <fullName>Protein DWARF-27 homolog</fullName>
        <shortName>AtD27</shortName>
    </alternativeName>
</protein>
<accession>Q7XA78</accession>
<dbReference type="EC" id="5.2.1.14"/>
<dbReference type="EMBL" id="AC006550">
    <property type="status" value="NOT_ANNOTATED_CDS"/>
    <property type="molecule type" value="Genomic_DNA"/>
</dbReference>
<dbReference type="EMBL" id="CP002684">
    <property type="protein sequence ID" value="AEE27521.1"/>
    <property type="molecule type" value="Genomic_DNA"/>
</dbReference>
<dbReference type="EMBL" id="BT010155">
    <property type="protein sequence ID" value="AAQ22624.1"/>
    <property type="molecule type" value="mRNA"/>
</dbReference>
<dbReference type="RefSeq" id="NP_563673.1">
    <molecule id="Q7XA78-1"/>
    <property type="nucleotide sequence ID" value="NM_100187.3"/>
</dbReference>
<dbReference type="FunCoup" id="Q7XA78">
    <property type="interactions" value="474"/>
</dbReference>
<dbReference type="STRING" id="3702.Q7XA78"/>
<dbReference type="PaxDb" id="3702-AT1G03055.1"/>
<dbReference type="ProteomicsDB" id="222741">
    <molecule id="Q7XA78-1"/>
</dbReference>
<dbReference type="EnsemblPlants" id="AT1G03055.1">
    <molecule id="Q7XA78-1"/>
    <property type="protein sequence ID" value="AT1G03055.1"/>
    <property type="gene ID" value="AT1G03055"/>
</dbReference>
<dbReference type="GeneID" id="838334"/>
<dbReference type="Gramene" id="AT1G03055.1">
    <molecule id="Q7XA78-1"/>
    <property type="protein sequence ID" value="AT1G03055.1"/>
    <property type="gene ID" value="AT1G03055"/>
</dbReference>
<dbReference type="KEGG" id="ath:AT1G03055"/>
<dbReference type="Araport" id="AT1G03055"/>
<dbReference type="TAIR" id="AT1G03055">
    <property type="gene designation" value="D27"/>
</dbReference>
<dbReference type="eggNOG" id="ENOG502QSSG">
    <property type="taxonomic scope" value="Eukaryota"/>
</dbReference>
<dbReference type="HOGENOM" id="CLU_076741_0_1_1"/>
<dbReference type="InParanoid" id="Q7XA78"/>
<dbReference type="OMA" id="TTIFFAW"/>
<dbReference type="OrthoDB" id="416096at2759"/>
<dbReference type="PhylomeDB" id="Q7XA78"/>
<dbReference type="PRO" id="PR:Q7XA78"/>
<dbReference type="Proteomes" id="UP000006548">
    <property type="component" value="Chromosome 1"/>
</dbReference>
<dbReference type="ExpressionAtlas" id="Q7XA78">
    <property type="expression patterns" value="baseline and differential"/>
</dbReference>
<dbReference type="GO" id="GO:0009507">
    <property type="term" value="C:chloroplast"/>
    <property type="evidence" value="ECO:0007669"/>
    <property type="project" value="UniProtKB-SubCell"/>
</dbReference>
<dbReference type="GO" id="GO:0009536">
    <property type="term" value="C:plastid"/>
    <property type="evidence" value="ECO:0000314"/>
    <property type="project" value="TAIR"/>
</dbReference>
<dbReference type="GO" id="GO:0106365">
    <property type="term" value="F:beta-carotene isomerase activity"/>
    <property type="evidence" value="ECO:0007669"/>
    <property type="project" value="UniProtKB-EC"/>
</dbReference>
<dbReference type="GO" id="GO:0005506">
    <property type="term" value="F:iron ion binding"/>
    <property type="evidence" value="ECO:0007669"/>
    <property type="project" value="InterPro"/>
</dbReference>
<dbReference type="GO" id="GO:0010223">
    <property type="term" value="P:secondary shoot formation"/>
    <property type="evidence" value="ECO:0000315"/>
    <property type="project" value="TAIR"/>
</dbReference>
<dbReference type="GO" id="GO:1901601">
    <property type="term" value="P:strigolactone biosynthetic process"/>
    <property type="evidence" value="ECO:0000316"/>
    <property type="project" value="TAIR"/>
</dbReference>
<dbReference type="InterPro" id="IPR038938">
    <property type="entry name" value="D27-like"/>
</dbReference>
<dbReference type="InterPro" id="IPR025114">
    <property type="entry name" value="D27-like_C"/>
</dbReference>
<dbReference type="PANTHER" id="PTHR33591">
    <property type="entry name" value="BETA-CAROTENE ISOMERASE D27"/>
    <property type="match status" value="1"/>
</dbReference>
<dbReference type="PANTHER" id="PTHR33591:SF1">
    <property type="entry name" value="BETA-CAROTENE ISOMERASE D27, CHLOROPLASTIC"/>
    <property type="match status" value="1"/>
</dbReference>
<dbReference type="Pfam" id="PF13225">
    <property type="entry name" value="D27-like_C"/>
    <property type="match status" value="1"/>
</dbReference>
<organism>
    <name type="scientific">Arabidopsis thaliana</name>
    <name type="common">Mouse-ear cress</name>
    <dbReference type="NCBI Taxonomy" id="3702"/>
    <lineage>
        <taxon>Eukaryota</taxon>
        <taxon>Viridiplantae</taxon>
        <taxon>Streptophyta</taxon>
        <taxon>Embryophyta</taxon>
        <taxon>Tracheophyta</taxon>
        <taxon>Spermatophyta</taxon>
        <taxon>Magnoliopsida</taxon>
        <taxon>eudicotyledons</taxon>
        <taxon>Gunneridae</taxon>
        <taxon>Pentapetalae</taxon>
        <taxon>rosids</taxon>
        <taxon>malvids</taxon>
        <taxon>Brassicales</taxon>
        <taxon>Brassicaceae</taxon>
        <taxon>Camelineae</taxon>
        <taxon>Arabidopsis</taxon>
    </lineage>
</organism>
<comment type="function">
    <text evidence="3 4">Involved in strigolactones biosynthesis by catalyzing the isomerization of the C9-C10 double bond in all-trans-beta-carotene leading to 9-cis-beta-carotene and providing the substrate for CCD7. Strigolactones are hormones that inhibit tillering and shoot branching through the MAX-dependent pathway, contribute to the regulation of shoot architectural response to phosphate-limiting conditions and function as rhizosphere signal that stimulates hyphal branching of arbuscular mycorrhizal fungi and trigger seed germination of root parasitic weeds.</text>
</comment>
<comment type="catalytic activity">
    <reaction evidence="3">
        <text>all-trans-beta-carotene = 9-cis-beta-carotene</text>
        <dbReference type="Rhea" id="RHEA:34455"/>
        <dbReference type="ChEBI" id="CHEBI:17579"/>
        <dbReference type="ChEBI" id="CHEBI:67188"/>
        <dbReference type="EC" id="5.2.1.14"/>
    </reaction>
</comment>
<comment type="cofactor">
    <cofactor evidence="1">
        <name>Fe cation</name>
        <dbReference type="ChEBI" id="CHEBI:24875"/>
    </cofactor>
</comment>
<comment type="subcellular location">
    <subcellularLocation>
        <location evidence="4">Plastid</location>
        <location evidence="4">Chloroplast</location>
    </subcellularLocation>
</comment>
<comment type="alternative products">
    <event type="alternative splicing"/>
    <isoform>
        <id>Q7XA78-1</id>
        <name>1</name>
        <sequence type="displayed"/>
    </isoform>
    <text>A number of isoforms are produced. According to EST sequences.</text>
</comment>
<comment type="tissue specificity">
    <text evidence="4">Expressed in hypocotyls and shoots. Expressed at low levels in roots.</text>
</comment>
<comment type="disruption phenotype">
    <text evidence="4">Increased shoot branching.</text>
</comment>
<reference key="1">
    <citation type="journal article" date="2000" name="Nature">
        <title>Sequence and analysis of chromosome 1 of the plant Arabidopsis thaliana.</title>
        <authorList>
            <person name="Theologis A."/>
            <person name="Ecker J.R."/>
            <person name="Palm C.J."/>
            <person name="Federspiel N.A."/>
            <person name="Kaul S."/>
            <person name="White O."/>
            <person name="Alonso J."/>
            <person name="Altafi H."/>
            <person name="Araujo R."/>
            <person name="Bowman C.L."/>
            <person name="Brooks S.Y."/>
            <person name="Buehler E."/>
            <person name="Chan A."/>
            <person name="Chao Q."/>
            <person name="Chen H."/>
            <person name="Cheuk R.F."/>
            <person name="Chin C.W."/>
            <person name="Chung M.K."/>
            <person name="Conn L."/>
            <person name="Conway A.B."/>
            <person name="Conway A.R."/>
            <person name="Creasy T.H."/>
            <person name="Dewar K."/>
            <person name="Dunn P."/>
            <person name="Etgu P."/>
            <person name="Feldblyum T.V."/>
            <person name="Feng J.-D."/>
            <person name="Fong B."/>
            <person name="Fujii C.Y."/>
            <person name="Gill J.E."/>
            <person name="Goldsmith A.D."/>
            <person name="Haas B."/>
            <person name="Hansen N.F."/>
            <person name="Hughes B."/>
            <person name="Huizar L."/>
            <person name="Hunter J.L."/>
            <person name="Jenkins J."/>
            <person name="Johnson-Hopson C."/>
            <person name="Khan S."/>
            <person name="Khaykin E."/>
            <person name="Kim C.J."/>
            <person name="Koo H.L."/>
            <person name="Kremenetskaia I."/>
            <person name="Kurtz D.B."/>
            <person name="Kwan A."/>
            <person name="Lam B."/>
            <person name="Langin-Hooper S."/>
            <person name="Lee A."/>
            <person name="Lee J.M."/>
            <person name="Lenz C.A."/>
            <person name="Li J.H."/>
            <person name="Li Y.-P."/>
            <person name="Lin X."/>
            <person name="Liu S.X."/>
            <person name="Liu Z.A."/>
            <person name="Luros J.S."/>
            <person name="Maiti R."/>
            <person name="Marziali A."/>
            <person name="Militscher J."/>
            <person name="Miranda M."/>
            <person name="Nguyen M."/>
            <person name="Nierman W.C."/>
            <person name="Osborne B.I."/>
            <person name="Pai G."/>
            <person name="Peterson J."/>
            <person name="Pham P.K."/>
            <person name="Rizzo M."/>
            <person name="Rooney T."/>
            <person name="Rowley D."/>
            <person name="Sakano H."/>
            <person name="Salzberg S.L."/>
            <person name="Schwartz J.R."/>
            <person name="Shinn P."/>
            <person name="Southwick A.M."/>
            <person name="Sun H."/>
            <person name="Tallon L.J."/>
            <person name="Tambunga G."/>
            <person name="Toriumi M.J."/>
            <person name="Town C.D."/>
            <person name="Utterback T."/>
            <person name="Van Aken S."/>
            <person name="Vaysberg M."/>
            <person name="Vysotskaia V.S."/>
            <person name="Walker M."/>
            <person name="Wu D."/>
            <person name="Yu G."/>
            <person name="Fraser C.M."/>
            <person name="Venter J.C."/>
            <person name="Davis R.W."/>
        </authorList>
    </citation>
    <scope>NUCLEOTIDE SEQUENCE [LARGE SCALE GENOMIC DNA]</scope>
    <source>
        <strain>cv. Columbia</strain>
    </source>
</reference>
<reference key="2">
    <citation type="journal article" date="2017" name="Plant J.">
        <title>Araport11: a complete reannotation of the Arabidopsis thaliana reference genome.</title>
        <authorList>
            <person name="Cheng C.Y."/>
            <person name="Krishnakumar V."/>
            <person name="Chan A.P."/>
            <person name="Thibaud-Nissen F."/>
            <person name="Schobel S."/>
            <person name="Town C.D."/>
        </authorList>
    </citation>
    <scope>GENOME REANNOTATION</scope>
    <source>
        <strain>cv. Columbia</strain>
    </source>
</reference>
<reference key="3">
    <citation type="journal article" date="2003" name="Science">
        <title>Empirical analysis of transcriptional activity in the Arabidopsis genome.</title>
        <authorList>
            <person name="Yamada K."/>
            <person name="Lim J."/>
            <person name="Dale J.M."/>
            <person name="Chen H."/>
            <person name="Shinn P."/>
            <person name="Palm C.J."/>
            <person name="Southwick A.M."/>
            <person name="Wu H.C."/>
            <person name="Kim C.J."/>
            <person name="Nguyen M."/>
            <person name="Pham P.K."/>
            <person name="Cheuk R.F."/>
            <person name="Karlin-Newmann G."/>
            <person name="Liu S.X."/>
            <person name="Lam B."/>
            <person name="Sakano H."/>
            <person name="Wu T."/>
            <person name="Yu G."/>
            <person name="Miranda M."/>
            <person name="Quach H.L."/>
            <person name="Tripp M."/>
            <person name="Chang C.H."/>
            <person name="Lee J.M."/>
            <person name="Toriumi M.J."/>
            <person name="Chan M.M."/>
            <person name="Tang C.C."/>
            <person name="Onodera C.S."/>
            <person name="Deng J.M."/>
            <person name="Akiyama K."/>
            <person name="Ansari Y."/>
            <person name="Arakawa T."/>
            <person name="Banh J."/>
            <person name="Banno F."/>
            <person name="Bowser L."/>
            <person name="Brooks S.Y."/>
            <person name="Carninci P."/>
            <person name="Chao Q."/>
            <person name="Choy N."/>
            <person name="Enju A."/>
            <person name="Goldsmith A.D."/>
            <person name="Gurjal M."/>
            <person name="Hansen N.F."/>
            <person name="Hayashizaki Y."/>
            <person name="Johnson-Hopson C."/>
            <person name="Hsuan V.W."/>
            <person name="Iida K."/>
            <person name="Karnes M."/>
            <person name="Khan S."/>
            <person name="Koesema E."/>
            <person name="Ishida J."/>
            <person name="Jiang P.X."/>
            <person name="Jones T."/>
            <person name="Kawai J."/>
            <person name="Kamiya A."/>
            <person name="Meyers C."/>
            <person name="Nakajima M."/>
            <person name="Narusaka M."/>
            <person name="Seki M."/>
            <person name="Sakurai T."/>
            <person name="Satou M."/>
            <person name="Tamse R."/>
            <person name="Vaysberg M."/>
            <person name="Wallender E.K."/>
            <person name="Wong C."/>
            <person name="Yamamura Y."/>
            <person name="Yuan S."/>
            <person name="Shinozaki K."/>
            <person name="Davis R.W."/>
            <person name="Theologis A."/>
            <person name="Ecker J.R."/>
        </authorList>
    </citation>
    <scope>NUCLEOTIDE SEQUENCE [LARGE SCALE MRNA]</scope>
    <source>
        <strain>cv. Columbia</strain>
    </source>
</reference>
<reference key="4">
    <citation type="journal article" date="2012" name="Plant Physiol.">
        <title>The Arabidopsis ortholog of rice DWARF27 acts upstream of MAX1 in the control of plant development by strigolactones.</title>
        <authorList>
            <person name="Waters M.T."/>
            <person name="Brewer P.B."/>
            <person name="Bussell J.D."/>
            <person name="Smith S.M."/>
            <person name="Beveridge C.A."/>
        </authorList>
    </citation>
    <scope>FUNCTION</scope>
    <scope>SUBCELLULAR LOCATION</scope>
    <scope>TISSUE SPECIFICITY</scope>
    <scope>DISRUPTION PHENOTYPE</scope>
</reference>
<reference key="5">
    <citation type="journal article" date="2012" name="Science">
        <title>The path from beta-carotene to carlactone, a strigolactone-like plant hormone.</title>
        <authorList>
            <person name="Alder A."/>
            <person name="Jamil M."/>
            <person name="Marzorati M."/>
            <person name="Bruno M."/>
            <person name="Vermathen M."/>
            <person name="Bigler P."/>
            <person name="Ghisla S."/>
            <person name="Bouwmeester H."/>
            <person name="Beyer P."/>
            <person name="Al-Babili S."/>
        </authorList>
    </citation>
    <scope>FUNCTION</scope>
    <scope>CATALYTIC ACTIVITY</scope>
</reference>
<evidence type="ECO:0000250" key="1"/>
<evidence type="ECO:0000255" key="2"/>
<evidence type="ECO:0000269" key="3">
    <source>
    </source>
</evidence>
<evidence type="ECO:0000269" key="4">
    <source>
    </source>
</evidence>
<sequence>MNTKLSLSQTKIFTFTTWFNDTRSGLDRRSSISPTLCSKPVYSGKLKAAKETARIETSNTKNASIEDSFFSKIAINYLSKNLQDAAGISSSSKSTDYDRLVDTATRVSRNFDTKQQHEFVLSSLDRALPTVISSLIKMAFPPSKVSRELFALFTTISFAWLVGPSEVRETEVNGRKEKSVVYIEKCRFLEQSNCVGMCTHICKIPSQIFIKNSLGMPIYMEPDFNDLSCKMMFGREPPEIEDDPAMKQPCFEFCKSNKSYGVKH</sequence>
<gene>
    <name type="primary">D27</name>
    <name type="ordered locus">At1g03055</name>
    <name type="ORF">F10O3</name>
</gene>